<name>GNTX_SHIFL</name>
<evidence type="ECO:0000250" key="1"/>
<evidence type="ECO:0000305" key="2"/>
<gene>
    <name type="primary">gntX</name>
    <name type="ordered locus">SF3436</name>
    <name type="ordered locus">S4330</name>
</gene>
<sequence length="227" mass="25770">MLTVPGLCWLCRMPLALGHWGICSVCSRATRTDKTLCPQCGLPATHSHLPCGRCLQKPPPWQRLVTVADYAPPLSPLIHQLKFSRRSEIASALSRLLLLEVLHARRTTGLQLPDRIISVPLWQRRHWRRGFNQSDLLCQPLSRWLHCQWDSEAVTRTRATATQHFLSARLRKRNLKNAFRLELPVQGRHMVIVDDVVTTGSTVAEIAQLLLRNGAATVQVWCLCRTL</sequence>
<reference key="1">
    <citation type="journal article" date="2002" name="Nucleic Acids Res.">
        <title>Genome sequence of Shigella flexneri 2a: insights into pathogenicity through comparison with genomes of Escherichia coli K12 and O157.</title>
        <authorList>
            <person name="Jin Q."/>
            <person name="Yuan Z."/>
            <person name="Xu J."/>
            <person name="Wang Y."/>
            <person name="Shen Y."/>
            <person name="Lu W."/>
            <person name="Wang J."/>
            <person name="Liu H."/>
            <person name="Yang J."/>
            <person name="Yang F."/>
            <person name="Zhang X."/>
            <person name="Zhang J."/>
            <person name="Yang G."/>
            <person name="Wu H."/>
            <person name="Qu D."/>
            <person name="Dong J."/>
            <person name="Sun L."/>
            <person name="Xue Y."/>
            <person name="Zhao A."/>
            <person name="Gao Y."/>
            <person name="Zhu J."/>
            <person name="Kan B."/>
            <person name="Ding K."/>
            <person name="Chen S."/>
            <person name="Cheng H."/>
            <person name="Yao Z."/>
            <person name="He B."/>
            <person name="Chen R."/>
            <person name="Ma D."/>
            <person name="Qiang B."/>
            <person name="Wen Y."/>
            <person name="Hou Y."/>
            <person name="Yu J."/>
        </authorList>
    </citation>
    <scope>NUCLEOTIDE SEQUENCE [LARGE SCALE GENOMIC DNA]</scope>
    <source>
        <strain>301 / Serotype 2a</strain>
    </source>
</reference>
<reference key="2">
    <citation type="journal article" date="2003" name="Infect. Immun.">
        <title>Complete genome sequence and comparative genomics of Shigella flexneri serotype 2a strain 2457T.</title>
        <authorList>
            <person name="Wei J."/>
            <person name="Goldberg M.B."/>
            <person name="Burland V."/>
            <person name="Venkatesan M.M."/>
            <person name="Deng W."/>
            <person name="Fournier G."/>
            <person name="Mayhew G.F."/>
            <person name="Plunkett G. III"/>
            <person name="Rose D.J."/>
            <person name="Darling A."/>
            <person name="Mau B."/>
            <person name="Perna N.T."/>
            <person name="Payne S.M."/>
            <person name="Runyen-Janecky L.J."/>
            <person name="Zhou S."/>
            <person name="Schwartz D.C."/>
            <person name="Blattner F.R."/>
        </authorList>
    </citation>
    <scope>NUCLEOTIDE SEQUENCE [LARGE SCALE GENOMIC DNA]</scope>
    <source>
        <strain>ATCC 700930 / 2457T / Serotype 2a</strain>
    </source>
</reference>
<comment type="function">
    <text evidence="1">Could be involved in gluconate metabolism.</text>
</comment>
<comment type="similarity">
    <text evidence="2">Belongs to the ComF/GntX family.</text>
</comment>
<comment type="sequence caution" evidence="2">
    <conflict type="erroneous initiation">
        <sequence resource="EMBL-CDS" id="AAN44897"/>
    </conflict>
    <text>Extended N-terminus.</text>
</comment>
<comment type="sequence caution" evidence="2">
    <conflict type="erroneous initiation">
        <sequence resource="EMBL-CDS" id="AAP19284"/>
    </conflict>
    <text>Extended N-terminus.</text>
</comment>
<protein>
    <recommendedName>
        <fullName>DNA utilization protein YhgH</fullName>
    </recommendedName>
    <alternativeName>
        <fullName>Protein GntX</fullName>
    </alternativeName>
</protein>
<organism>
    <name type="scientific">Shigella flexneri</name>
    <dbReference type="NCBI Taxonomy" id="623"/>
    <lineage>
        <taxon>Bacteria</taxon>
        <taxon>Pseudomonadati</taxon>
        <taxon>Pseudomonadota</taxon>
        <taxon>Gammaproteobacteria</taxon>
        <taxon>Enterobacterales</taxon>
        <taxon>Enterobacteriaceae</taxon>
        <taxon>Shigella</taxon>
    </lineage>
</organism>
<accession>Q83J92</accession>
<accession>Q7UAT5</accession>
<keyword id="KW-1185">Reference proteome</keyword>
<dbReference type="EMBL" id="AE005674">
    <property type="protein sequence ID" value="AAN44897.2"/>
    <property type="status" value="ALT_INIT"/>
    <property type="molecule type" value="Genomic_DNA"/>
</dbReference>
<dbReference type="EMBL" id="AE014073">
    <property type="protein sequence ID" value="AAP19284.1"/>
    <property type="status" value="ALT_INIT"/>
    <property type="molecule type" value="Genomic_DNA"/>
</dbReference>
<dbReference type="RefSeq" id="WP_000958727.1">
    <property type="nucleotide sequence ID" value="NZ_WPGW01000066.1"/>
</dbReference>
<dbReference type="STRING" id="198214.SF3436"/>
<dbReference type="PaxDb" id="198214-SF3436"/>
<dbReference type="GeneID" id="75060010"/>
<dbReference type="KEGG" id="sfl:SF3436"/>
<dbReference type="KEGG" id="sfx:S4330"/>
<dbReference type="PATRIC" id="fig|198214.7.peg.4053"/>
<dbReference type="HOGENOM" id="CLU_054549_0_2_6"/>
<dbReference type="Proteomes" id="UP000001006">
    <property type="component" value="Chromosome"/>
</dbReference>
<dbReference type="Proteomes" id="UP000002673">
    <property type="component" value="Chromosome"/>
</dbReference>
<dbReference type="CDD" id="cd06223">
    <property type="entry name" value="PRTases_typeI"/>
    <property type="match status" value="1"/>
</dbReference>
<dbReference type="FunFam" id="3.40.50.2020:FF:000054">
    <property type="entry name" value="ComF family protein"/>
    <property type="match status" value="1"/>
</dbReference>
<dbReference type="Gene3D" id="3.40.50.2020">
    <property type="match status" value="1"/>
</dbReference>
<dbReference type="InterPro" id="IPR051910">
    <property type="entry name" value="ComF/GntX_DNA_util-trans"/>
</dbReference>
<dbReference type="InterPro" id="IPR005222">
    <property type="entry name" value="Competence_ComF"/>
</dbReference>
<dbReference type="InterPro" id="IPR000836">
    <property type="entry name" value="PRibTrfase_dom"/>
</dbReference>
<dbReference type="InterPro" id="IPR029057">
    <property type="entry name" value="PRTase-like"/>
</dbReference>
<dbReference type="NCBIfam" id="TIGR00201">
    <property type="entry name" value="comF"/>
    <property type="match status" value="1"/>
</dbReference>
<dbReference type="NCBIfam" id="NF008616">
    <property type="entry name" value="PRK11595.1"/>
    <property type="match status" value="1"/>
</dbReference>
<dbReference type="PANTHER" id="PTHR47505">
    <property type="entry name" value="DNA UTILIZATION PROTEIN YHGH"/>
    <property type="match status" value="1"/>
</dbReference>
<dbReference type="PANTHER" id="PTHR47505:SF1">
    <property type="entry name" value="DNA UTILIZATION PROTEIN YHGH"/>
    <property type="match status" value="1"/>
</dbReference>
<dbReference type="Pfam" id="PF00156">
    <property type="entry name" value="Pribosyltran"/>
    <property type="match status" value="1"/>
</dbReference>
<dbReference type="SUPFAM" id="SSF53271">
    <property type="entry name" value="PRTase-like"/>
    <property type="match status" value="1"/>
</dbReference>
<proteinExistence type="inferred from homology"/>
<feature type="chain" id="PRO_0000209463" description="DNA utilization protein YhgH">
    <location>
        <begin position="1"/>
        <end position="227"/>
    </location>
</feature>